<proteinExistence type="inferred from homology"/>
<name>SSAA_STAEQ</name>
<reference key="1">
    <citation type="journal article" date="2005" name="J. Bacteriol.">
        <title>Insights on evolution of virulence and resistance from the complete genome analysis of an early methicillin-resistant Staphylococcus aureus strain and a biofilm-producing methicillin-resistant Staphylococcus epidermidis strain.</title>
        <authorList>
            <person name="Gill S.R."/>
            <person name="Fouts D.E."/>
            <person name="Archer G.L."/>
            <person name="Mongodin E.F."/>
            <person name="DeBoy R.T."/>
            <person name="Ravel J."/>
            <person name="Paulsen I.T."/>
            <person name="Kolonay J.F."/>
            <person name="Brinkac L.M."/>
            <person name="Beanan M.J."/>
            <person name="Dodson R.J."/>
            <person name="Daugherty S.C."/>
            <person name="Madupu R."/>
            <person name="Angiuoli S.V."/>
            <person name="Durkin A.S."/>
            <person name="Haft D.H."/>
            <person name="Vamathevan J.J."/>
            <person name="Khouri H."/>
            <person name="Utterback T.R."/>
            <person name="Lee C."/>
            <person name="Dimitrov G."/>
            <person name="Jiang L."/>
            <person name="Qin H."/>
            <person name="Weidman J."/>
            <person name="Tran K."/>
            <person name="Kang K.H."/>
            <person name="Hance I.R."/>
            <person name="Nelson K.E."/>
            <person name="Fraser C.M."/>
        </authorList>
    </citation>
    <scope>NUCLEOTIDE SEQUENCE [LARGE SCALE GENOMIC DNA]</scope>
    <source>
        <strain>ATCC 35984 / DSM 28319 / BCRC 17069 / CCUG 31568 / BM 3577 / RP62A</strain>
    </source>
</reference>
<sequence>MKKIATATIATAGIATFAFAHHDAQAAEQNNDGYNPNDPYSYSYTYTIDAEGNYHYTWKGNWSPDRVNTSYNYNNYNNYNYYGYNNYSNYNNYSNYNNYNNYQSNNTQSQRTTQPTGGLGASYSTSSSNVHVTTTSAPSSNGVSLSNARSASGNLYTSGQCTYYVFDRVGGKIGSTWGNANNWANAAARSGYTVNNSPAKGAILQTSQGAYGHVAYVEGVNSNGSIRVSEMNYGHGAGVVTSRTISASQAASYNYIH</sequence>
<organism>
    <name type="scientific">Staphylococcus epidermidis (strain ATCC 35984 / DSM 28319 / BCRC 17069 / CCUG 31568 / BM 3577 / RP62A)</name>
    <dbReference type="NCBI Taxonomy" id="176279"/>
    <lineage>
        <taxon>Bacteria</taxon>
        <taxon>Bacillati</taxon>
        <taxon>Bacillota</taxon>
        <taxon>Bacilli</taxon>
        <taxon>Bacillales</taxon>
        <taxon>Staphylococcaceae</taxon>
        <taxon>Staphylococcus</taxon>
    </lineage>
</organism>
<gene>
    <name type="primary">ssaA1</name>
    <name type="ordered locus">SERP1880</name>
</gene>
<gene>
    <name type="primary">ssaA2</name>
    <name type="ordered locus">SERP2136</name>
</gene>
<accession>Q5HLV2</accession>
<comment type="function">
    <text evidence="1">Not known; immunogenic protein.</text>
</comment>
<comment type="subcellular location">
    <subcellularLocation>
        <location evidence="1">Secreted</location>
    </subcellularLocation>
</comment>
<protein>
    <recommendedName>
        <fullName>Staphylococcal secretory antigen SsaA</fullName>
    </recommendedName>
</protein>
<keyword id="KW-1185">Reference proteome</keyword>
<keyword id="KW-0677">Repeat</keyword>
<keyword id="KW-0964">Secreted</keyword>
<keyword id="KW-0732">Signal</keyword>
<keyword id="KW-0843">Virulence</keyword>
<dbReference type="EMBL" id="CP000029">
    <property type="protein sequence ID" value="AAW55260.1"/>
    <property type="molecule type" value="Genomic_DNA"/>
</dbReference>
<dbReference type="EMBL" id="CP000029">
    <property type="protein sequence ID" value="AAW53036.1"/>
    <property type="molecule type" value="Genomic_DNA"/>
</dbReference>
<dbReference type="RefSeq" id="WP_002440903.1">
    <property type="nucleotide sequence ID" value="NC_002976.3"/>
</dbReference>
<dbReference type="SMR" id="Q5HLV2"/>
<dbReference type="STRING" id="176279.SERP1880"/>
<dbReference type="KEGG" id="ser:SERP1880"/>
<dbReference type="KEGG" id="ser:SERP2136"/>
<dbReference type="eggNOG" id="COG3942">
    <property type="taxonomic scope" value="Bacteria"/>
</dbReference>
<dbReference type="HOGENOM" id="CLU_016043_11_0_9"/>
<dbReference type="Proteomes" id="UP000000531">
    <property type="component" value="Chromosome"/>
</dbReference>
<dbReference type="GO" id="GO:0005576">
    <property type="term" value="C:extracellular region"/>
    <property type="evidence" value="ECO:0007669"/>
    <property type="project" value="UniProtKB-SubCell"/>
</dbReference>
<dbReference type="Gene3D" id="3.90.1720.10">
    <property type="entry name" value="endopeptidase domain like (from Nostoc punctiforme)"/>
    <property type="match status" value="1"/>
</dbReference>
<dbReference type="InterPro" id="IPR007921">
    <property type="entry name" value="CHAP_dom"/>
</dbReference>
<dbReference type="InterPro" id="IPR038765">
    <property type="entry name" value="Papain-like_cys_pep_sf"/>
</dbReference>
<dbReference type="Pfam" id="PF05257">
    <property type="entry name" value="CHAP"/>
    <property type="match status" value="1"/>
</dbReference>
<dbReference type="SUPFAM" id="SSF54001">
    <property type="entry name" value="Cysteine proteinases"/>
    <property type="match status" value="1"/>
</dbReference>
<dbReference type="PROSITE" id="PS50911">
    <property type="entry name" value="CHAP"/>
    <property type="match status" value="1"/>
</dbReference>
<evidence type="ECO:0000250" key="1"/>
<evidence type="ECO:0000255" key="2"/>
<evidence type="ECO:0000255" key="3">
    <source>
        <dbReference type="PROSITE-ProRule" id="PRU00048"/>
    </source>
</evidence>
<evidence type="ECO:0000256" key="4">
    <source>
        <dbReference type="SAM" id="MobiDB-lite"/>
    </source>
</evidence>
<feature type="signal peptide" evidence="2">
    <location>
        <begin position="1"/>
        <end position="26"/>
    </location>
</feature>
<feature type="chain" id="PRO_0000045321" description="Staphylococcal secretory antigen SsaA">
    <location>
        <begin position="27"/>
        <end position="257"/>
    </location>
</feature>
<feature type="repeat" description="1">
    <location>
        <begin position="73"/>
        <end position="75"/>
    </location>
</feature>
<feature type="repeat" description="2">
    <location>
        <begin position="76"/>
        <end position="78"/>
    </location>
</feature>
<feature type="repeat" description="3">
    <location>
        <begin position="84"/>
        <end position="86"/>
    </location>
</feature>
<feature type="repeat" description="4">
    <location>
        <begin position="87"/>
        <end position="89"/>
    </location>
</feature>
<feature type="repeat" description="5">
    <location>
        <begin position="90"/>
        <end position="92"/>
    </location>
</feature>
<feature type="repeat" description="6">
    <location>
        <begin position="93"/>
        <end position="95"/>
    </location>
</feature>
<feature type="repeat" description="7">
    <location>
        <begin position="96"/>
        <end position="98"/>
    </location>
</feature>
<feature type="repeat" description="8">
    <location>
        <begin position="99"/>
        <end position="101"/>
    </location>
</feature>
<feature type="domain" description="Peptidase C51" evidence="3">
    <location>
        <begin position="136"/>
        <end position="257"/>
    </location>
</feature>
<feature type="region of interest" description="8 X 3 AA tandem repeats of Y-[NS]-N">
    <location>
        <begin position="73"/>
        <end position="101"/>
    </location>
</feature>
<feature type="region of interest" description="Disordered" evidence="4">
    <location>
        <begin position="101"/>
        <end position="144"/>
    </location>
</feature>
<feature type="compositionally biased region" description="Polar residues" evidence="4">
    <location>
        <begin position="107"/>
        <end position="116"/>
    </location>
</feature>
<feature type="compositionally biased region" description="Low complexity" evidence="4">
    <location>
        <begin position="122"/>
        <end position="136"/>
    </location>
</feature>